<comment type="cofactor">
    <cofactor evidence="1">
        <name>Zn(2+)</name>
        <dbReference type="ChEBI" id="CHEBI:29105"/>
    </cofactor>
    <text evidence="1">Binds 2 Zn(2+) ions per subunit.</text>
</comment>
<comment type="subcellular location">
    <subcellularLocation>
        <location evidence="3">Secreted</location>
    </subcellularLocation>
</comment>
<comment type="similarity">
    <text evidence="3">Belongs to the peptidase M20A family.</text>
</comment>
<sequence length="442" mass="48000">MKLQYLVALLFVQAVPPVTAGYIHQYALAGSAIRQPIDQKTQREDLNKLVSDSPLLSLHRTICEIESVSNHEGAVGEMLIKYLRDHDFTVEKQIVPADRGTNSTAERFNIWAYPKGFPRPKIILTSHIDTVPPHIKYSLHAPDGDFDRAKVRIMGRGTVDAKASVAAQIIAALKHLKSNKDIPLGLLFVVSEEVGGSGMVHFSNSELNTNPPFFHTLIFGEPTDLTLVDGHKGNLRVTIHAKGVAAHSGYPWLGHSAISEILPILARMDELGDIPVETGGLPSSEKYGRTTVNIGTIKGGAADNVVPETASASISVRLAAGTPEEAEEVIRRAVNDVSGGSTNITVNFPDSMPYPPIDLDVDVEGFDISTVNYGTDIPKLEIHDEELEVKVKRYLYGPGTIFVAHGAEEGITVGDLEKAVEGYSKLIDAAVERDWPREVVVN</sequence>
<evidence type="ECO:0000250" key="1"/>
<evidence type="ECO:0000255" key="2"/>
<evidence type="ECO:0000305" key="3"/>
<name>P20D1_PARBA</name>
<accession>C1GQH3</accession>
<dbReference type="EC" id="3.4.17.-"/>
<dbReference type="EMBL" id="KN293993">
    <property type="protein sequence ID" value="EEH37847.1"/>
    <property type="molecule type" value="Genomic_DNA"/>
</dbReference>
<dbReference type="RefSeq" id="XP_002796909.1">
    <property type="nucleotide sequence ID" value="XM_002796863.2"/>
</dbReference>
<dbReference type="SMR" id="C1GQH3"/>
<dbReference type="STRING" id="502779.C1GQH3"/>
<dbReference type="GeneID" id="9100343"/>
<dbReference type="KEGG" id="pbl:PAAG_00768"/>
<dbReference type="VEuPathDB" id="FungiDB:PAAG_00768"/>
<dbReference type="eggNOG" id="KOG2275">
    <property type="taxonomic scope" value="Eukaryota"/>
</dbReference>
<dbReference type="HOGENOM" id="CLU_021802_3_0_1"/>
<dbReference type="OMA" id="RLHKGVM"/>
<dbReference type="OrthoDB" id="3064516at2759"/>
<dbReference type="Proteomes" id="UP000002059">
    <property type="component" value="Partially assembled WGS sequence"/>
</dbReference>
<dbReference type="GO" id="GO:0005576">
    <property type="term" value="C:extracellular region"/>
    <property type="evidence" value="ECO:0007669"/>
    <property type="project" value="UniProtKB-SubCell"/>
</dbReference>
<dbReference type="GO" id="GO:0046872">
    <property type="term" value="F:metal ion binding"/>
    <property type="evidence" value="ECO:0007669"/>
    <property type="project" value="UniProtKB-KW"/>
</dbReference>
<dbReference type="GO" id="GO:0008233">
    <property type="term" value="F:peptidase activity"/>
    <property type="evidence" value="ECO:0007669"/>
    <property type="project" value="UniProtKB-KW"/>
</dbReference>
<dbReference type="GO" id="GO:0006508">
    <property type="term" value="P:proteolysis"/>
    <property type="evidence" value="ECO:0007669"/>
    <property type="project" value="UniProtKB-KW"/>
</dbReference>
<dbReference type="CDD" id="cd05652">
    <property type="entry name" value="M20_ArgE_DapE-like_fungal"/>
    <property type="match status" value="1"/>
</dbReference>
<dbReference type="Gene3D" id="3.30.70.360">
    <property type="match status" value="1"/>
</dbReference>
<dbReference type="Gene3D" id="3.40.630.10">
    <property type="entry name" value="Zn peptidases"/>
    <property type="match status" value="1"/>
</dbReference>
<dbReference type="InterPro" id="IPR036264">
    <property type="entry name" value="Bact_exopeptidase_dim_dom"/>
</dbReference>
<dbReference type="InterPro" id="IPR002933">
    <property type="entry name" value="Peptidase_M20"/>
</dbReference>
<dbReference type="InterPro" id="IPR011650">
    <property type="entry name" value="Peptidase_M20_dimer"/>
</dbReference>
<dbReference type="InterPro" id="IPR050072">
    <property type="entry name" value="Peptidase_M20A"/>
</dbReference>
<dbReference type="PANTHER" id="PTHR43808">
    <property type="entry name" value="ACETYLORNITHINE DEACETYLASE"/>
    <property type="match status" value="1"/>
</dbReference>
<dbReference type="PANTHER" id="PTHR43808:SF8">
    <property type="entry name" value="PEPTIDASE M20 DIMERISATION DOMAIN-CONTAINING PROTEIN"/>
    <property type="match status" value="1"/>
</dbReference>
<dbReference type="Pfam" id="PF07687">
    <property type="entry name" value="M20_dimer"/>
    <property type="match status" value="1"/>
</dbReference>
<dbReference type="Pfam" id="PF01546">
    <property type="entry name" value="Peptidase_M20"/>
    <property type="match status" value="1"/>
</dbReference>
<dbReference type="SUPFAM" id="SSF55031">
    <property type="entry name" value="Bacterial exopeptidase dimerisation domain"/>
    <property type="match status" value="1"/>
</dbReference>
<dbReference type="SUPFAM" id="SSF53187">
    <property type="entry name" value="Zn-dependent exopeptidases"/>
    <property type="match status" value="1"/>
</dbReference>
<proteinExistence type="inferred from homology"/>
<keyword id="KW-0325">Glycoprotein</keyword>
<keyword id="KW-0378">Hydrolase</keyword>
<keyword id="KW-0479">Metal-binding</keyword>
<keyword id="KW-0645">Protease</keyword>
<keyword id="KW-1185">Reference proteome</keyword>
<keyword id="KW-0964">Secreted</keyword>
<keyword id="KW-0732">Signal</keyword>
<keyword id="KW-0862">Zinc</keyword>
<gene>
    <name type="ORF">PAAG_00768</name>
</gene>
<organism>
    <name type="scientific">Paracoccidioides lutzii (strain ATCC MYA-826 / Pb01)</name>
    <name type="common">Paracoccidioides brasiliensis</name>
    <dbReference type="NCBI Taxonomy" id="502779"/>
    <lineage>
        <taxon>Eukaryota</taxon>
        <taxon>Fungi</taxon>
        <taxon>Dikarya</taxon>
        <taxon>Ascomycota</taxon>
        <taxon>Pezizomycotina</taxon>
        <taxon>Eurotiomycetes</taxon>
        <taxon>Eurotiomycetidae</taxon>
        <taxon>Onygenales</taxon>
        <taxon>Ajellomycetaceae</taxon>
        <taxon>Paracoccidioides</taxon>
    </lineage>
</organism>
<protein>
    <recommendedName>
        <fullName>Probable carboxypeptidase PAAG_00768</fullName>
        <ecNumber>3.4.17.-</ecNumber>
    </recommendedName>
    <alternativeName>
        <fullName>Peptidase M20 domain-containing protein PAAG_00768</fullName>
    </alternativeName>
</protein>
<feature type="signal peptide" evidence="2">
    <location>
        <begin position="1"/>
        <end position="20"/>
    </location>
</feature>
<feature type="chain" id="PRO_0000411237" description="Probable carboxypeptidase PAAG_00768">
    <location>
        <begin position="21"/>
        <end position="442"/>
    </location>
</feature>
<feature type="active site" description="Proton acceptor" evidence="1">
    <location>
        <position position="192"/>
    </location>
</feature>
<feature type="binding site" evidence="1">
    <location>
        <position position="160"/>
    </location>
    <ligand>
        <name>Zn(2+)</name>
        <dbReference type="ChEBI" id="CHEBI:29105"/>
        <label>1</label>
    </ligand>
</feature>
<feature type="binding site" evidence="1">
    <location>
        <position position="160"/>
    </location>
    <ligand>
        <name>Zn(2+)</name>
        <dbReference type="ChEBI" id="CHEBI:29105"/>
        <label>2</label>
    </ligand>
</feature>
<feature type="binding site" evidence="1">
    <location>
        <position position="193"/>
    </location>
    <ligand>
        <name>Zn(2+)</name>
        <dbReference type="ChEBI" id="CHEBI:29105"/>
        <label>1</label>
    </ligand>
</feature>
<feature type="glycosylation site" description="N-linked (GlcNAc...) asparagine" evidence="2">
    <location>
        <position position="102"/>
    </location>
</feature>
<feature type="glycosylation site" description="N-linked (GlcNAc...) asparagine" evidence="2">
    <location>
        <position position="343"/>
    </location>
</feature>
<reference key="1">
    <citation type="journal article" date="2011" name="PLoS Genet.">
        <title>Comparative genomic analysis of human fungal pathogens causing paracoccidioidomycosis.</title>
        <authorList>
            <person name="Desjardins C.A."/>
            <person name="Champion M.D."/>
            <person name="Holder J.W."/>
            <person name="Muszewska A."/>
            <person name="Goldberg J."/>
            <person name="Bailao A.M."/>
            <person name="Brigido M.M."/>
            <person name="Ferreira M.E."/>
            <person name="Garcia A.M."/>
            <person name="Grynberg M."/>
            <person name="Gujja S."/>
            <person name="Heiman D.I."/>
            <person name="Henn M.R."/>
            <person name="Kodira C.D."/>
            <person name="Leon-Narvaez H."/>
            <person name="Longo L.V.G."/>
            <person name="Ma L.-J."/>
            <person name="Malavazi I."/>
            <person name="Matsuo A.L."/>
            <person name="Morais F.V."/>
            <person name="Pereira M."/>
            <person name="Rodriguez-Brito S."/>
            <person name="Sakthikumar S."/>
            <person name="Salem-Izacc S.M."/>
            <person name="Sykes S.M."/>
            <person name="Teixeira M.M."/>
            <person name="Vallejo M.C."/>
            <person name="Walter M.E."/>
            <person name="Yandava C."/>
            <person name="Young S."/>
            <person name="Zeng Q."/>
            <person name="Zucker J."/>
            <person name="Felipe M.S."/>
            <person name="Goldman G.H."/>
            <person name="Haas B.J."/>
            <person name="McEwen J.G."/>
            <person name="Nino-Vega G."/>
            <person name="Puccia R."/>
            <person name="San-Blas G."/>
            <person name="Soares C.M."/>
            <person name="Birren B.W."/>
            <person name="Cuomo C.A."/>
        </authorList>
    </citation>
    <scope>NUCLEOTIDE SEQUENCE [LARGE SCALE GENOMIC DNA]</scope>
    <source>
        <strain>ATCC MYA-826 / Pb01</strain>
    </source>
</reference>